<keyword id="KW-0067">ATP-binding</keyword>
<keyword id="KW-0315">Glutamine amidotransferase</keyword>
<keyword id="KW-0332">GMP biosynthesis</keyword>
<keyword id="KW-0436">Ligase</keyword>
<keyword id="KW-0547">Nucleotide-binding</keyword>
<keyword id="KW-0658">Purine biosynthesis</keyword>
<keyword id="KW-1185">Reference proteome</keyword>
<feature type="chain" id="PRO_0000292197" description="GMP synthase [glutamine-hydrolyzing] subunit A">
    <location>
        <begin position="1"/>
        <end position="186"/>
    </location>
</feature>
<feature type="domain" description="Glutamine amidotransferase type-1" evidence="1">
    <location>
        <begin position="2"/>
        <end position="186"/>
    </location>
</feature>
<feature type="active site" description="Nucleophile" evidence="1">
    <location>
        <position position="76"/>
    </location>
</feature>
<feature type="active site" evidence="1">
    <location>
        <position position="163"/>
    </location>
</feature>
<feature type="active site" evidence="1">
    <location>
        <position position="165"/>
    </location>
</feature>
<sequence>MSIVIINNFGQYNHRISRTLKYLNIENSLIPNTTSFEEIEQMNPKGIILGGGPSIERIGNCKEIILNMDIPILGICLGHQIIADVFGGETKSAEIESYAQIELNILKENGLFKGIGDSLKVWASHKDEVVTLPENFEILANSDKCDIEAMKHEDKNIYGIQFHPEVQHTPRGGEIFENFNKICENY</sequence>
<protein>
    <recommendedName>
        <fullName evidence="1">GMP synthase [glutamine-hydrolyzing] subunit A</fullName>
        <ecNumber evidence="1">6.3.5.2</ecNumber>
    </recommendedName>
    <alternativeName>
        <fullName evidence="1">Glutamine amidotransferase</fullName>
    </alternativeName>
</protein>
<name>GUAAA_METST</name>
<accession>Q2NER5</accession>
<organism>
    <name type="scientific">Methanosphaera stadtmanae (strain ATCC 43021 / DSM 3091 / JCM 11832 / MCB-3)</name>
    <dbReference type="NCBI Taxonomy" id="339860"/>
    <lineage>
        <taxon>Archaea</taxon>
        <taxon>Methanobacteriati</taxon>
        <taxon>Methanobacteriota</taxon>
        <taxon>Methanomada group</taxon>
        <taxon>Methanobacteria</taxon>
        <taxon>Methanobacteriales</taxon>
        <taxon>Methanobacteriaceae</taxon>
        <taxon>Methanosphaera</taxon>
    </lineage>
</organism>
<proteinExistence type="inferred from homology"/>
<comment type="function">
    <text evidence="1">Catalyzes the synthesis of GMP from XMP.</text>
</comment>
<comment type="catalytic activity">
    <reaction evidence="1">
        <text>XMP + L-glutamine + ATP + H2O = GMP + L-glutamate + AMP + diphosphate + 2 H(+)</text>
        <dbReference type="Rhea" id="RHEA:11680"/>
        <dbReference type="ChEBI" id="CHEBI:15377"/>
        <dbReference type="ChEBI" id="CHEBI:15378"/>
        <dbReference type="ChEBI" id="CHEBI:29985"/>
        <dbReference type="ChEBI" id="CHEBI:30616"/>
        <dbReference type="ChEBI" id="CHEBI:33019"/>
        <dbReference type="ChEBI" id="CHEBI:57464"/>
        <dbReference type="ChEBI" id="CHEBI:58115"/>
        <dbReference type="ChEBI" id="CHEBI:58359"/>
        <dbReference type="ChEBI" id="CHEBI:456215"/>
        <dbReference type="EC" id="6.3.5.2"/>
    </reaction>
</comment>
<comment type="pathway">
    <text evidence="1">Purine metabolism; GMP biosynthesis; GMP from XMP (L-Gln route): step 1/1.</text>
</comment>
<comment type="subunit">
    <text evidence="1">Heterodimer composed of a glutamine amidotransferase subunit (A) and a GMP-binding subunit (B).</text>
</comment>
<gene>
    <name evidence="1" type="primary">guaAA</name>
    <name type="ordered locus">Msp_1311</name>
</gene>
<reference key="1">
    <citation type="journal article" date="2006" name="J. Bacteriol.">
        <title>The genome sequence of Methanosphaera stadtmanae reveals why this human intestinal archaeon is restricted to methanol and H2 for methane formation and ATP synthesis.</title>
        <authorList>
            <person name="Fricke W.F."/>
            <person name="Seedorf H."/>
            <person name="Henne A."/>
            <person name="Kruer M."/>
            <person name="Liesegang H."/>
            <person name="Hedderich R."/>
            <person name="Gottschalk G."/>
            <person name="Thauer R.K."/>
        </authorList>
    </citation>
    <scope>NUCLEOTIDE SEQUENCE [LARGE SCALE GENOMIC DNA]</scope>
    <source>
        <strain>ATCC 43021 / DSM 3091 / JCM 11832 / MCB-3</strain>
    </source>
</reference>
<evidence type="ECO:0000255" key="1">
    <source>
        <dbReference type="HAMAP-Rule" id="MF_01510"/>
    </source>
</evidence>
<dbReference type="EC" id="6.3.5.2" evidence="1"/>
<dbReference type="EMBL" id="CP000102">
    <property type="protein sequence ID" value="ABC57688.1"/>
    <property type="molecule type" value="Genomic_DNA"/>
</dbReference>
<dbReference type="RefSeq" id="WP_011406887.1">
    <property type="nucleotide sequence ID" value="NC_007681.1"/>
</dbReference>
<dbReference type="SMR" id="Q2NER5"/>
<dbReference type="STRING" id="339860.Msp_1311"/>
<dbReference type="MEROPS" id="C26.A31"/>
<dbReference type="KEGG" id="mst:Msp_1311"/>
<dbReference type="eggNOG" id="arCOG00087">
    <property type="taxonomic scope" value="Archaea"/>
</dbReference>
<dbReference type="HOGENOM" id="CLU_014340_1_4_2"/>
<dbReference type="OrthoDB" id="10772at2157"/>
<dbReference type="UniPathway" id="UPA00189">
    <property type="reaction ID" value="UER00296"/>
</dbReference>
<dbReference type="Proteomes" id="UP000001931">
    <property type="component" value="Chromosome"/>
</dbReference>
<dbReference type="GO" id="GO:0005829">
    <property type="term" value="C:cytosol"/>
    <property type="evidence" value="ECO:0007669"/>
    <property type="project" value="TreeGrafter"/>
</dbReference>
<dbReference type="GO" id="GO:0005524">
    <property type="term" value="F:ATP binding"/>
    <property type="evidence" value="ECO:0007669"/>
    <property type="project" value="UniProtKB-KW"/>
</dbReference>
<dbReference type="GO" id="GO:0003921">
    <property type="term" value="F:GMP synthase activity"/>
    <property type="evidence" value="ECO:0007669"/>
    <property type="project" value="TreeGrafter"/>
</dbReference>
<dbReference type="CDD" id="cd01742">
    <property type="entry name" value="GATase1_GMP_Synthase"/>
    <property type="match status" value="1"/>
</dbReference>
<dbReference type="FunFam" id="3.40.50.880:FF:000047">
    <property type="entry name" value="GMP synthase [glutamine-hydrolyzing] subunit A"/>
    <property type="match status" value="1"/>
</dbReference>
<dbReference type="Gene3D" id="3.40.50.880">
    <property type="match status" value="1"/>
</dbReference>
<dbReference type="HAMAP" id="MF_01510">
    <property type="entry name" value="GMP_synthase_A"/>
    <property type="match status" value="1"/>
</dbReference>
<dbReference type="InterPro" id="IPR029062">
    <property type="entry name" value="Class_I_gatase-like"/>
</dbReference>
<dbReference type="InterPro" id="IPR017926">
    <property type="entry name" value="GATASE"/>
</dbReference>
<dbReference type="InterPro" id="IPR004739">
    <property type="entry name" value="GMP_synth_GATase"/>
</dbReference>
<dbReference type="InterPro" id="IPR023686">
    <property type="entry name" value="GMP_synthase_A"/>
</dbReference>
<dbReference type="NCBIfam" id="TIGR00888">
    <property type="entry name" value="guaA_Nterm"/>
    <property type="match status" value="1"/>
</dbReference>
<dbReference type="NCBIfam" id="NF001975">
    <property type="entry name" value="PRK00758.1"/>
    <property type="match status" value="1"/>
</dbReference>
<dbReference type="PANTHER" id="PTHR11922:SF2">
    <property type="entry name" value="GMP SYNTHASE [GLUTAMINE-HYDROLYZING]"/>
    <property type="match status" value="1"/>
</dbReference>
<dbReference type="PANTHER" id="PTHR11922">
    <property type="entry name" value="GMP SYNTHASE-RELATED"/>
    <property type="match status" value="1"/>
</dbReference>
<dbReference type="Pfam" id="PF00117">
    <property type="entry name" value="GATase"/>
    <property type="match status" value="1"/>
</dbReference>
<dbReference type="PRINTS" id="PR00097">
    <property type="entry name" value="ANTSNTHASEII"/>
</dbReference>
<dbReference type="PRINTS" id="PR00096">
    <property type="entry name" value="GATASE"/>
</dbReference>
<dbReference type="SUPFAM" id="SSF52317">
    <property type="entry name" value="Class I glutamine amidotransferase-like"/>
    <property type="match status" value="1"/>
</dbReference>
<dbReference type="PROSITE" id="PS51273">
    <property type="entry name" value="GATASE_TYPE_1"/>
    <property type="match status" value="1"/>
</dbReference>